<reference key="1">
    <citation type="submission" date="2006-01" db="EMBL/GenBank/DDBJ databases">
        <title>Complete sequence of Anaeromyxobacter dehalogenans 2CP-C.</title>
        <authorList>
            <person name="Copeland A."/>
            <person name="Lucas S."/>
            <person name="Lapidus A."/>
            <person name="Barry K."/>
            <person name="Detter J.C."/>
            <person name="Glavina T."/>
            <person name="Hammon N."/>
            <person name="Israni S."/>
            <person name="Pitluck S."/>
            <person name="Brettin T."/>
            <person name="Bruce D."/>
            <person name="Han C."/>
            <person name="Tapia R."/>
            <person name="Gilna P."/>
            <person name="Kiss H."/>
            <person name="Schmutz J."/>
            <person name="Larimer F."/>
            <person name="Land M."/>
            <person name="Kyrpides N."/>
            <person name="Anderson I."/>
            <person name="Sanford R.A."/>
            <person name="Ritalahti K.M."/>
            <person name="Thomas H.S."/>
            <person name="Kirby J.R."/>
            <person name="Zhulin I.B."/>
            <person name="Loeffler F.E."/>
            <person name="Richardson P."/>
        </authorList>
    </citation>
    <scope>NUCLEOTIDE SEQUENCE [LARGE SCALE GENOMIC DNA]</scope>
    <source>
        <strain>2CP-C</strain>
    </source>
</reference>
<feature type="chain" id="PRO_0000329208" description="Phosphate acyltransferase">
    <location>
        <begin position="1"/>
        <end position="361"/>
    </location>
</feature>
<accession>Q2ILJ2</accession>
<organism>
    <name type="scientific">Anaeromyxobacter dehalogenans (strain 2CP-C)</name>
    <dbReference type="NCBI Taxonomy" id="290397"/>
    <lineage>
        <taxon>Bacteria</taxon>
        <taxon>Pseudomonadati</taxon>
        <taxon>Myxococcota</taxon>
        <taxon>Myxococcia</taxon>
        <taxon>Myxococcales</taxon>
        <taxon>Cystobacterineae</taxon>
        <taxon>Anaeromyxobacteraceae</taxon>
        <taxon>Anaeromyxobacter</taxon>
    </lineage>
</organism>
<dbReference type="EC" id="2.3.1.274" evidence="1"/>
<dbReference type="EMBL" id="CP000251">
    <property type="protein sequence ID" value="ABC82521.1"/>
    <property type="molecule type" value="Genomic_DNA"/>
</dbReference>
<dbReference type="RefSeq" id="WP_011421803.1">
    <property type="nucleotide sequence ID" value="NC_007760.1"/>
</dbReference>
<dbReference type="SMR" id="Q2ILJ2"/>
<dbReference type="STRING" id="290397.Adeh_2751"/>
<dbReference type="KEGG" id="ade:Adeh_2751"/>
<dbReference type="eggNOG" id="COG0416">
    <property type="taxonomic scope" value="Bacteria"/>
</dbReference>
<dbReference type="HOGENOM" id="CLU_039379_1_1_7"/>
<dbReference type="OrthoDB" id="9806408at2"/>
<dbReference type="UniPathway" id="UPA00085"/>
<dbReference type="Proteomes" id="UP000001935">
    <property type="component" value="Chromosome"/>
</dbReference>
<dbReference type="GO" id="GO:0005737">
    <property type="term" value="C:cytoplasm"/>
    <property type="evidence" value="ECO:0007669"/>
    <property type="project" value="UniProtKB-SubCell"/>
</dbReference>
<dbReference type="GO" id="GO:0043811">
    <property type="term" value="F:phosphate:acyl-[acyl carrier protein] acyltransferase activity"/>
    <property type="evidence" value="ECO:0007669"/>
    <property type="project" value="UniProtKB-UniRule"/>
</dbReference>
<dbReference type="GO" id="GO:0006633">
    <property type="term" value="P:fatty acid biosynthetic process"/>
    <property type="evidence" value="ECO:0007669"/>
    <property type="project" value="UniProtKB-UniRule"/>
</dbReference>
<dbReference type="GO" id="GO:0008654">
    <property type="term" value="P:phospholipid biosynthetic process"/>
    <property type="evidence" value="ECO:0007669"/>
    <property type="project" value="UniProtKB-KW"/>
</dbReference>
<dbReference type="Gene3D" id="3.40.718.10">
    <property type="entry name" value="Isopropylmalate Dehydrogenase"/>
    <property type="match status" value="1"/>
</dbReference>
<dbReference type="HAMAP" id="MF_00019">
    <property type="entry name" value="PlsX"/>
    <property type="match status" value="1"/>
</dbReference>
<dbReference type="InterPro" id="IPR003664">
    <property type="entry name" value="FA_synthesis"/>
</dbReference>
<dbReference type="InterPro" id="IPR012281">
    <property type="entry name" value="Phospholipid_synth_PlsX-like"/>
</dbReference>
<dbReference type="NCBIfam" id="TIGR00182">
    <property type="entry name" value="plsX"/>
    <property type="match status" value="1"/>
</dbReference>
<dbReference type="PANTHER" id="PTHR30100">
    <property type="entry name" value="FATTY ACID/PHOSPHOLIPID SYNTHESIS PROTEIN PLSX"/>
    <property type="match status" value="1"/>
</dbReference>
<dbReference type="PANTHER" id="PTHR30100:SF1">
    <property type="entry name" value="PHOSPHATE ACYLTRANSFERASE"/>
    <property type="match status" value="1"/>
</dbReference>
<dbReference type="Pfam" id="PF02504">
    <property type="entry name" value="FA_synthesis"/>
    <property type="match status" value="1"/>
</dbReference>
<dbReference type="PIRSF" id="PIRSF002465">
    <property type="entry name" value="Phsphlp_syn_PlsX"/>
    <property type="match status" value="1"/>
</dbReference>
<dbReference type="SUPFAM" id="SSF53659">
    <property type="entry name" value="Isocitrate/Isopropylmalate dehydrogenase-like"/>
    <property type="match status" value="1"/>
</dbReference>
<name>PLSX_ANADE</name>
<protein>
    <recommendedName>
        <fullName evidence="1">Phosphate acyltransferase</fullName>
        <ecNumber evidence="1">2.3.1.274</ecNumber>
    </recommendedName>
    <alternativeName>
        <fullName evidence="1">Acyl-ACP phosphotransacylase</fullName>
    </alternativeName>
    <alternativeName>
        <fullName evidence="1">Acyl-[acyl-carrier-protein]--phosphate acyltransferase</fullName>
    </alternativeName>
    <alternativeName>
        <fullName evidence="1">Phosphate-acyl-ACP acyltransferase</fullName>
    </alternativeName>
</protein>
<gene>
    <name evidence="1" type="primary">plsX</name>
    <name type="ordered locus">Adeh_2751</name>
</gene>
<keyword id="KW-0963">Cytoplasm</keyword>
<keyword id="KW-0444">Lipid biosynthesis</keyword>
<keyword id="KW-0443">Lipid metabolism</keyword>
<keyword id="KW-0594">Phospholipid biosynthesis</keyword>
<keyword id="KW-1208">Phospholipid metabolism</keyword>
<keyword id="KW-1185">Reference proteome</keyword>
<keyword id="KW-0808">Transferase</keyword>
<sequence length="361" mass="37654">MVGKIAPIAVDAMGGDHAPGAIVQGAVNAARKGLPVVLVGPEARVREELARHRAGSSLPLEVHPATEVVEMHDHPGQAMRRKKDNSIRVCFDLVASGRAAGMVSAGNSGAVMAGAILVLGRPEGVERPAIVSVLPALKGSPLMLDMGAVVDCRPIHLVQFALMGEVFSRRVHGVARPRIAILSNGEEDTKGTDLTRAAAAALRRAPIDFVGYCEGRDLLTGEVDVIVTDGFTGNVALKTMEGTAKVVGEYLKRALRSTTVSKIGGLLSKAALEGMKKRIDWREVGGAPLVGVNGVGFISHGRSDALAIENAIRRAGDAARTHFIDEIARAVAPSHALLEVPANGAAAQQGPTPRRTAPPQT</sequence>
<evidence type="ECO:0000255" key="1">
    <source>
        <dbReference type="HAMAP-Rule" id="MF_00019"/>
    </source>
</evidence>
<comment type="function">
    <text evidence="1">Catalyzes the reversible formation of acyl-phosphate (acyl-PO(4)) from acyl-[acyl-carrier-protein] (acyl-ACP). This enzyme utilizes acyl-ACP as fatty acyl donor, but not acyl-CoA.</text>
</comment>
<comment type="catalytic activity">
    <reaction evidence="1">
        <text>a fatty acyl-[ACP] + phosphate = an acyl phosphate + holo-[ACP]</text>
        <dbReference type="Rhea" id="RHEA:42292"/>
        <dbReference type="Rhea" id="RHEA-COMP:9685"/>
        <dbReference type="Rhea" id="RHEA-COMP:14125"/>
        <dbReference type="ChEBI" id="CHEBI:43474"/>
        <dbReference type="ChEBI" id="CHEBI:59918"/>
        <dbReference type="ChEBI" id="CHEBI:64479"/>
        <dbReference type="ChEBI" id="CHEBI:138651"/>
        <dbReference type="EC" id="2.3.1.274"/>
    </reaction>
</comment>
<comment type="pathway">
    <text evidence="1">Lipid metabolism; phospholipid metabolism.</text>
</comment>
<comment type="subunit">
    <text evidence="1">Homodimer. Probably interacts with PlsY.</text>
</comment>
<comment type="subcellular location">
    <subcellularLocation>
        <location evidence="1">Cytoplasm</location>
    </subcellularLocation>
    <text evidence="1">Associated with the membrane possibly through PlsY.</text>
</comment>
<comment type="similarity">
    <text evidence="1">Belongs to the PlsX family.</text>
</comment>
<proteinExistence type="inferred from homology"/>